<feature type="transit peptide" description="Chloroplast" evidence="15">
    <location>
        <begin position="1"/>
        <end position="51"/>
    </location>
</feature>
<feature type="chain" id="PRO_0000413668" description="Protein TIC110, chloroplastic">
    <location>
        <begin position="52"/>
        <end position="1016"/>
    </location>
</feature>
<feature type="topological domain" description="Stromal" evidence="1">
    <location>
        <begin position="52"/>
        <end position="95"/>
    </location>
</feature>
<feature type="transmembrane region" description="Helical" evidence="2">
    <location>
        <begin position="96"/>
        <end position="116"/>
    </location>
</feature>
<feature type="topological domain" description="Chloroplast intermembrane" evidence="1">
    <location>
        <begin position="117"/>
        <end position="118"/>
    </location>
</feature>
<feature type="transmembrane region" description="Helical" evidence="2">
    <location>
        <begin position="119"/>
        <end position="139"/>
    </location>
</feature>
<feature type="topological domain" description="Stromal" evidence="1">
    <location>
        <begin position="140"/>
        <end position="259"/>
    </location>
</feature>
<feature type="transmembrane region" description="Helical" evidence="2">
    <location>
        <begin position="260"/>
        <end position="280"/>
    </location>
</feature>
<feature type="topological domain" description="Chloroplast intermembrane" evidence="1">
    <location>
        <begin position="281"/>
        <end position="368"/>
    </location>
</feature>
<feature type="transmembrane region" description="Helical" evidence="1">
    <location>
        <begin position="369"/>
        <end position="386"/>
    </location>
</feature>
<feature type="topological domain" description="Stromal" evidence="1">
    <location>
        <begin position="387"/>
        <end position="632"/>
    </location>
</feature>
<feature type="transmembrane region" description="Helical" evidence="1">
    <location>
        <begin position="633"/>
        <end position="650"/>
    </location>
</feature>
<feature type="topological domain" description="Chloroplast intermembrane" evidence="1">
    <location>
        <begin position="651"/>
        <end position="719"/>
    </location>
</feature>
<feature type="transmembrane region" description="Helical" evidence="1">
    <location>
        <begin position="720"/>
        <end position="736"/>
    </location>
</feature>
<feature type="topological domain" description="Stromal" evidence="1">
    <location>
        <begin position="737"/>
        <end position="1016"/>
    </location>
</feature>
<feature type="region of interest" description="Disordered" evidence="3">
    <location>
        <begin position="654"/>
        <end position="708"/>
    </location>
</feature>
<feature type="compositionally biased region" description="Basic and acidic residues" evidence="3">
    <location>
        <begin position="654"/>
        <end position="669"/>
    </location>
</feature>
<feature type="compositionally biased region" description="Acidic residues" evidence="3">
    <location>
        <begin position="670"/>
        <end position="680"/>
    </location>
</feature>
<feature type="compositionally biased region" description="Basic and acidic residues" evidence="3">
    <location>
        <begin position="684"/>
        <end position="699"/>
    </location>
</feature>
<feature type="modified residue" description="N-acetylserine" evidence="15">
    <location>
        <position position="52"/>
    </location>
</feature>
<feature type="sequence conflict" description="In Ref. 3; AAM20701." evidence="12" ref="3">
    <original>K</original>
    <variation>N</variation>
    <location>
        <position position="220"/>
    </location>
</feature>
<accession>Q8LPR9</accession>
<accession>Q0WMF8</accession>
<accession>Q8LPG5</accession>
<accession>Q9LMI9</accession>
<accession>Q9M9Z7</accession>
<dbReference type="EMBL" id="AC011001">
    <property type="protein sequence ID" value="AAF63131.1"/>
    <property type="molecule type" value="Genomic_DNA"/>
</dbReference>
<dbReference type="EMBL" id="AC067971">
    <property type="protein sequence ID" value="AAF82224.1"/>
    <property type="molecule type" value="Genomic_DNA"/>
</dbReference>
<dbReference type="EMBL" id="CP002684">
    <property type="protein sequence ID" value="AEE28057.1"/>
    <property type="molecule type" value="Genomic_DNA"/>
</dbReference>
<dbReference type="EMBL" id="AY094426">
    <property type="protein sequence ID" value="AAM19799.1"/>
    <property type="molecule type" value="mRNA"/>
</dbReference>
<dbReference type="EMBL" id="AY099850">
    <property type="protein sequence ID" value="AAM20701.1"/>
    <property type="molecule type" value="mRNA"/>
</dbReference>
<dbReference type="EMBL" id="AK229869">
    <property type="protein sequence ID" value="BAF01698.1"/>
    <property type="molecule type" value="mRNA"/>
</dbReference>
<dbReference type="PIR" id="B86204">
    <property type="entry name" value="B86204"/>
</dbReference>
<dbReference type="RefSeq" id="NP_172176.1">
    <property type="nucleotide sequence ID" value="NM_100568.4"/>
</dbReference>
<dbReference type="BioGRID" id="22446">
    <property type="interactions" value="9"/>
</dbReference>
<dbReference type="FunCoup" id="Q8LPR9">
    <property type="interactions" value="1156"/>
</dbReference>
<dbReference type="IntAct" id="Q8LPR9">
    <property type="interactions" value="9"/>
</dbReference>
<dbReference type="MINT" id="Q8LPR9"/>
<dbReference type="STRING" id="3702.Q8LPR9"/>
<dbReference type="TCDB" id="3.A.9.1.2">
    <property type="family name" value="the chloroplast envelope protein translocase (cept or tic-toc) family"/>
</dbReference>
<dbReference type="iPTMnet" id="Q8LPR9"/>
<dbReference type="SwissPalm" id="Q8LPR9"/>
<dbReference type="PaxDb" id="3702-AT1G06950.1"/>
<dbReference type="ProMEX" id="Q8LPR9"/>
<dbReference type="ProteomicsDB" id="232456"/>
<dbReference type="EnsemblPlants" id="AT1G06950.1">
    <property type="protein sequence ID" value="AT1G06950.1"/>
    <property type="gene ID" value="AT1G06950"/>
</dbReference>
<dbReference type="GeneID" id="837205"/>
<dbReference type="Gramene" id="AT1G06950.1">
    <property type="protein sequence ID" value="AT1G06950.1"/>
    <property type="gene ID" value="AT1G06950"/>
</dbReference>
<dbReference type="KEGG" id="ath:AT1G06950"/>
<dbReference type="Araport" id="AT1G06950"/>
<dbReference type="TAIR" id="AT1G06950">
    <property type="gene designation" value="TIC110"/>
</dbReference>
<dbReference type="eggNOG" id="ENOG502QS6A">
    <property type="taxonomic scope" value="Eukaryota"/>
</dbReference>
<dbReference type="HOGENOM" id="CLU_006871_0_0_1"/>
<dbReference type="InParanoid" id="Q8LPR9"/>
<dbReference type="OMA" id="PTEYAQK"/>
<dbReference type="PhylomeDB" id="Q8LPR9"/>
<dbReference type="PRO" id="PR:Q8LPR9"/>
<dbReference type="Proteomes" id="UP000006548">
    <property type="component" value="Chromosome 1"/>
</dbReference>
<dbReference type="ExpressionAtlas" id="Q8LPR9">
    <property type="expression patterns" value="baseline and differential"/>
</dbReference>
<dbReference type="GO" id="GO:0009507">
    <property type="term" value="C:chloroplast"/>
    <property type="evidence" value="ECO:0000314"/>
    <property type="project" value="TAIR"/>
</dbReference>
<dbReference type="GO" id="GO:0009941">
    <property type="term" value="C:chloroplast envelope"/>
    <property type="evidence" value="ECO:0007005"/>
    <property type="project" value="TAIR"/>
</dbReference>
<dbReference type="GO" id="GO:0005576">
    <property type="term" value="C:extracellular region"/>
    <property type="evidence" value="ECO:0007005"/>
    <property type="project" value="TAIR"/>
</dbReference>
<dbReference type="GO" id="GO:0009536">
    <property type="term" value="C:plastid"/>
    <property type="evidence" value="ECO:0007005"/>
    <property type="project" value="TAIR"/>
</dbReference>
<dbReference type="GO" id="GO:0031897">
    <property type="term" value="C:Tic complex"/>
    <property type="evidence" value="ECO:0000304"/>
    <property type="project" value="TAIR"/>
</dbReference>
<dbReference type="GO" id="GO:0061927">
    <property type="term" value="C:TOC-TIC supercomplex I"/>
    <property type="evidence" value="ECO:0000314"/>
    <property type="project" value="TAIR"/>
</dbReference>
<dbReference type="GO" id="GO:0009658">
    <property type="term" value="P:chloroplast organization"/>
    <property type="evidence" value="ECO:0000315"/>
    <property type="project" value="TAIR"/>
</dbReference>
<dbReference type="GO" id="GO:0045037">
    <property type="term" value="P:protein import into chloroplast stroma"/>
    <property type="evidence" value="ECO:0000315"/>
    <property type="project" value="TAIR"/>
</dbReference>
<dbReference type="InterPro" id="IPR031610">
    <property type="entry name" value="TIC110"/>
</dbReference>
<dbReference type="PANTHER" id="PTHR34935">
    <property type="entry name" value="PROTEIN TIC110, CHLOROPLASTIC"/>
    <property type="match status" value="1"/>
</dbReference>
<dbReference type="PANTHER" id="PTHR34935:SF3">
    <property type="entry name" value="PROTEIN TIC110, CHLOROPLASTIC"/>
    <property type="match status" value="1"/>
</dbReference>
<dbReference type="Pfam" id="PF16940">
    <property type="entry name" value="Tic110"/>
    <property type="match status" value="1"/>
</dbReference>
<evidence type="ECO:0000250" key="1"/>
<evidence type="ECO:0000255" key="2"/>
<evidence type="ECO:0000256" key="3">
    <source>
        <dbReference type="SAM" id="MobiDB-lite"/>
    </source>
</evidence>
<evidence type="ECO:0000269" key="4">
    <source>
    </source>
</evidence>
<evidence type="ECO:0000269" key="5">
    <source>
    </source>
</evidence>
<evidence type="ECO:0000269" key="6">
    <source>
    </source>
</evidence>
<evidence type="ECO:0000269" key="7">
    <source>
    </source>
</evidence>
<evidence type="ECO:0000269" key="8">
    <source>
    </source>
</evidence>
<evidence type="ECO:0000269" key="9">
    <source>
    </source>
</evidence>
<evidence type="ECO:0000269" key="10">
    <source>
    </source>
</evidence>
<evidence type="ECO:0000269" key="11">
    <source>
    </source>
</evidence>
<evidence type="ECO:0000305" key="12"/>
<evidence type="ECO:0000305" key="13">
    <source>
    </source>
</evidence>
<evidence type="ECO:0000305" key="14">
    <source>
    </source>
</evidence>
<evidence type="ECO:0007744" key="15">
    <source>
    </source>
</evidence>
<comment type="function">
    <text evidence="4 5 7 8">Involved in protein precursor import into chloroplasts. Forms a voltage-dependent cation-selective channel at the inner envelope of chloroplasts, which specifically responds to a transit peptide. Associates with both the precursor and mature forms of the preprotein.</text>
</comment>
<comment type="subunit">
    <text evidence="8 9 10 11">Part of the Tic complex. Interacts with HSP70, HSP93 and TIC40. Interacts with the Toc complex components TOC33, TOC75 and TOC159. Interacts with LTD.</text>
</comment>
<comment type="interaction">
    <interactant intactId="EBI-639092">
        <id>Q8LPR9</id>
    </interactant>
    <interactant intactId="EBI-2297694">
        <id>Q9FI56</id>
        <label>CLPC1</label>
    </interactant>
    <organismsDiffer>false</organismsDiffer>
    <experiments>4</experiments>
</comment>
<comment type="interaction">
    <interactant intactId="EBI-639092">
        <id>Q8LPR9</id>
    </interactant>
    <interactant intactId="EBI-639157">
        <id>Q9FMD5</id>
        <label>TIC40</label>
    </interactant>
    <organismsDiffer>false</organismsDiffer>
    <experiments>3</experiments>
</comment>
<comment type="subcellular location">
    <subcellularLocation>
        <location evidence="12">Plastid</location>
        <location evidence="12">Chloroplast inner membrane</location>
        <topology evidence="12">Multi-pass membrane protein</topology>
    </subcellularLocation>
</comment>
<comment type="tissue specificity">
    <text evidence="6 7 8">Expressed in seedlings, flowers, leaves, stems and roots.</text>
</comment>
<comment type="developmental stage">
    <text evidence="7">Expressed throughout development.</text>
</comment>
<comment type="domain">
    <text>An internal domain (143-652) is sufficient for assembly into supercomplex with Toc complex.</text>
</comment>
<comment type="domain">
    <text>Residues 235-420 contain a binding site for preprotein transit peptides.</text>
</comment>
<comment type="disruption phenotype">
    <text evidence="7 8">Embryo lethal.</text>
</comment>
<comment type="miscellaneous">
    <text evidence="13 14">The region 143-1016 is indicated to be located in the stroma (PubMed:12874276, PubMed:9632730) while the homologous region in pea TIC110 contains probably 4 trans-membrane domains resulting in 2 regions in the intermembrane space localized to form supercomplexes with the TOC machinery and to receive the transit peptide of preproteins.</text>
</comment>
<comment type="miscellaneous">
    <text>Inserts into the inner envelope membrane from the stroma after import from the cytoplasm.</text>
</comment>
<comment type="similarity">
    <text evidence="12">Belongs to the chloroplast envelope anion channel-forming Tic110 (TC 1.A.18) family.</text>
</comment>
<reference key="1">
    <citation type="journal article" date="2000" name="Nature">
        <title>Sequence and analysis of chromosome 1 of the plant Arabidopsis thaliana.</title>
        <authorList>
            <person name="Theologis A."/>
            <person name="Ecker J.R."/>
            <person name="Palm C.J."/>
            <person name="Federspiel N.A."/>
            <person name="Kaul S."/>
            <person name="White O."/>
            <person name="Alonso J."/>
            <person name="Altafi H."/>
            <person name="Araujo R."/>
            <person name="Bowman C.L."/>
            <person name="Brooks S.Y."/>
            <person name="Buehler E."/>
            <person name="Chan A."/>
            <person name="Chao Q."/>
            <person name="Chen H."/>
            <person name="Cheuk R.F."/>
            <person name="Chin C.W."/>
            <person name="Chung M.K."/>
            <person name="Conn L."/>
            <person name="Conway A.B."/>
            <person name="Conway A.R."/>
            <person name="Creasy T.H."/>
            <person name="Dewar K."/>
            <person name="Dunn P."/>
            <person name="Etgu P."/>
            <person name="Feldblyum T.V."/>
            <person name="Feng J.-D."/>
            <person name="Fong B."/>
            <person name="Fujii C.Y."/>
            <person name="Gill J.E."/>
            <person name="Goldsmith A.D."/>
            <person name="Haas B."/>
            <person name="Hansen N.F."/>
            <person name="Hughes B."/>
            <person name="Huizar L."/>
            <person name="Hunter J.L."/>
            <person name="Jenkins J."/>
            <person name="Johnson-Hopson C."/>
            <person name="Khan S."/>
            <person name="Khaykin E."/>
            <person name="Kim C.J."/>
            <person name="Koo H.L."/>
            <person name="Kremenetskaia I."/>
            <person name="Kurtz D.B."/>
            <person name="Kwan A."/>
            <person name="Lam B."/>
            <person name="Langin-Hooper S."/>
            <person name="Lee A."/>
            <person name="Lee J.M."/>
            <person name="Lenz C.A."/>
            <person name="Li J.H."/>
            <person name="Li Y.-P."/>
            <person name="Lin X."/>
            <person name="Liu S.X."/>
            <person name="Liu Z.A."/>
            <person name="Luros J.S."/>
            <person name="Maiti R."/>
            <person name="Marziali A."/>
            <person name="Militscher J."/>
            <person name="Miranda M."/>
            <person name="Nguyen M."/>
            <person name="Nierman W.C."/>
            <person name="Osborne B.I."/>
            <person name="Pai G."/>
            <person name="Peterson J."/>
            <person name="Pham P.K."/>
            <person name="Rizzo M."/>
            <person name="Rooney T."/>
            <person name="Rowley D."/>
            <person name="Sakano H."/>
            <person name="Salzberg S.L."/>
            <person name="Schwartz J.R."/>
            <person name="Shinn P."/>
            <person name="Southwick A.M."/>
            <person name="Sun H."/>
            <person name="Tallon L.J."/>
            <person name="Tambunga G."/>
            <person name="Toriumi M.J."/>
            <person name="Town C.D."/>
            <person name="Utterback T."/>
            <person name="Van Aken S."/>
            <person name="Vaysberg M."/>
            <person name="Vysotskaia V.S."/>
            <person name="Walker M."/>
            <person name="Wu D."/>
            <person name="Yu G."/>
            <person name="Fraser C.M."/>
            <person name="Venter J.C."/>
            <person name="Davis R.W."/>
        </authorList>
    </citation>
    <scope>NUCLEOTIDE SEQUENCE [LARGE SCALE GENOMIC DNA]</scope>
    <source>
        <strain>cv. Columbia</strain>
    </source>
</reference>
<reference key="2">
    <citation type="journal article" date="2017" name="Plant J.">
        <title>Araport11: a complete reannotation of the Arabidopsis thaliana reference genome.</title>
        <authorList>
            <person name="Cheng C.Y."/>
            <person name="Krishnakumar V."/>
            <person name="Chan A.P."/>
            <person name="Thibaud-Nissen F."/>
            <person name="Schobel S."/>
            <person name="Town C.D."/>
        </authorList>
    </citation>
    <scope>GENOME REANNOTATION</scope>
    <source>
        <strain>cv. Columbia</strain>
    </source>
</reference>
<reference key="3">
    <citation type="journal article" date="2003" name="Science">
        <title>Empirical analysis of transcriptional activity in the Arabidopsis genome.</title>
        <authorList>
            <person name="Yamada K."/>
            <person name="Lim J."/>
            <person name="Dale J.M."/>
            <person name="Chen H."/>
            <person name="Shinn P."/>
            <person name="Palm C.J."/>
            <person name="Southwick A.M."/>
            <person name="Wu H.C."/>
            <person name="Kim C.J."/>
            <person name="Nguyen M."/>
            <person name="Pham P.K."/>
            <person name="Cheuk R.F."/>
            <person name="Karlin-Newmann G."/>
            <person name="Liu S.X."/>
            <person name="Lam B."/>
            <person name="Sakano H."/>
            <person name="Wu T."/>
            <person name="Yu G."/>
            <person name="Miranda M."/>
            <person name="Quach H.L."/>
            <person name="Tripp M."/>
            <person name="Chang C.H."/>
            <person name="Lee J.M."/>
            <person name="Toriumi M.J."/>
            <person name="Chan M.M."/>
            <person name="Tang C.C."/>
            <person name="Onodera C.S."/>
            <person name="Deng J.M."/>
            <person name="Akiyama K."/>
            <person name="Ansari Y."/>
            <person name="Arakawa T."/>
            <person name="Banh J."/>
            <person name="Banno F."/>
            <person name="Bowser L."/>
            <person name="Brooks S.Y."/>
            <person name="Carninci P."/>
            <person name="Chao Q."/>
            <person name="Choy N."/>
            <person name="Enju A."/>
            <person name="Goldsmith A.D."/>
            <person name="Gurjal M."/>
            <person name="Hansen N.F."/>
            <person name="Hayashizaki Y."/>
            <person name="Johnson-Hopson C."/>
            <person name="Hsuan V.W."/>
            <person name="Iida K."/>
            <person name="Karnes M."/>
            <person name="Khan S."/>
            <person name="Koesema E."/>
            <person name="Ishida J."/>
            <person name="Jiang P.X."/>
            <person name="Jones T."/>
            <person name="Kawai J."/>
            <person name="Kamiya A."/>
            <person name="Meyers C."/>
            <person name="Nakajima M."/>
            <person name="Narusaka M."/>
            <person name="Seki M."/>
            <person name="Sakurai T."/>
            <person name="Satou M."/>
            <person name="Tamse R."/>
            <person name="Vaysberg M."/>
            <person name="Wallender E.K."/>
            <person name="Wong C."/>
            <person name="Yamamura Y."/>
            <person name="Yuan S."/>
            <person name="Shinozaki K."/>
            <person name="Davis R.W."/>
            <person name="Theologis A."/>
            <person name="Ecker J.R."/>
        </authorList>
    </citation>
    <scope>NUCLEOTIDE SEQUENCE [LARGE SCALE MRNA]</scope>
    <source>
        <strain>cv. Columbia</strain>
    </source>
</reference>
<reference key="4">
    <citation type="submission" date="2006-07" db="EMBL/GenBank/DDBJ databases">
        <title>Large-scale analysis of RIKEN Arabidopsis full-length (RAFL) cDNAs.</title>
        <authorList>
            <person name="Totoki Y."/>
            <person name="Seki M."/>
            <person name="Ishida J."/>
            <person name="Nakajima M."/>
            <person name="Enju A."/>
            <person name="Kamiya A."/>
            <person name="Narusaka M."/>
            <person name="Shin-i T."/>
            <person name="Nakagawa M."/>
            <person name="Sakamoto N."/>
            <person name="Oishi K."/>
            <person name="Kohara Y."/>
            <person name="Kobayashi M."/>
            <person name="Toyoda A."/>
            <person name="Sakaki Y."/>
            <person name="Sakurai T."/>
            <person name="Iida K."/>
            <person name="Akiyama K."/>
            <person name="Satou M."/>
            <person name="Toyoda T."/>
            <person name="Konagaya A."/>
            <person name="Carninci P."/>
            <person name="Kawai J."/>
            <person name="Hayashizaki Y."/>
            <person name="Shinozaki K."/>
        </authorList>
    </citation>
    <scope>NUCLEOTIDE SEQUENCE [LARGE SCALE MRNA] OF 823-1016</scope>
    <source>
        <strain>cv. Columbia</strain>
    </source>
</reference>
<reference key="5">
    <citation type="journal article" date="1998" name="J. Biol. Chem.">
        <title>The hydrophilic domain of Tic110, an inner envelope membrane component of the chloroplastic protein translocation apparatus, faces the stromal compartment.</title>
        <authorList>
            <person name="Jackson D.T."/>
            <person name="Froehlich J.E."/>
            <person name="Keegstra K."/>
        </authorList>
    </citation>
    <scope>TOPOLOGY</scope>
</reference>
<reference key="6">
    <citation type="journal article" date="2002" name="EMBO J.">
        <title>The preprotein conducting channel at the inner envelope membrane of plastids.</title>
        <authorList>
            <person name="Heins L."/>
            <person name="Mehrle A."/>
            <person name="Hemmler R."/>
            <person name="Wagner R."/>
            <person name="Kuechler M."/>
            <person name="Hoermann F."/>
            <person name="Sveshnikov D."/>
            <person name="Soll J."/>
        </authorList>
    </citation>
    <scope>FUNCTION</scope>
</reference>
<reference key="7">
    <citation type="journal article" date="2003" name="J. Biol. Chem.">
        <title>atTic110 functions as a scaffold for coordinating the stromal events of protein import into chloroplasts.</title>
        <authorList>
            <person name="Inaba T."/>
            <person name="Li M."/>
            <person name="Alvarez-Huerta M."/>
            <person name="Kessler F."/>
            <person name="Schnell D.J."/>
        </authorList>
    </citation>
    <scope>FUNCTION</scope>
    <scope>TOPOLOGY</scope>
</reference>
<reference key="8">
    <citation type="journal article" date="2004" name="J. Biol. Chem.">
        <title>The protein translocon of the plastid envelopes.</title>
        <authorList>
            <person name="Vojta A."/>
            <person name="Alavi M."/>
            <person name="Becker T."/>
            <person name="Hoermann F."/>
            <person name="Kuechler M."/>
            <person name="Soll J."/>
            <person name="Thomson R."/>
            <person name="Schleiff E."/>
        </authorList>
    </citation>
    <scope>TISSUE SPECIFICITY</scope>
</reference>
<reference key="9">
    <citation type="journal article" date="2005" name="Plant Cell">
        <title>Arabidopsis tic110 is essential for the assembly and function of the protein import machinery of plastids.</title>
        <authorList>
            <person name="Inaba T."/>
            <person name="Alvarez-Huerta M."/>
            <person name="Li M."/>
            <person name="Bauer J."/>
            <person name="Ewers C."/>
            <person name="Kessler F."/>
            <person name="Schnell D.J."/>
        </authorList>
    </citation>
    <scope>FUNCTION</scope>
    <scope>TISSUE SPECIFICITY</scope>
    <scope>DISRUPTION PHENOTYPE</scope>
    <scope>INTERACTION WITH HSP93; TIC40 AND TOC COMPLEX</scope>
</reference>
<reference key="10">
    <citation type="journal article" date="2005" name="Plant J.">
        <title>In vivo studies on the roles of Tic110, Tic40 and Hsp93 during chloroplast protein import.</title>
        <authorList>
            <person name="Kovacheva S."/>
            <person name="Bedard J."/>
            <person name="Patel R."/>
            <person name="Dudley P."/>
            <person name="Twell D."/>
            <person name="Rios G."/>
            <person name="Koncz C."/>
            <person name="Jarvis P."/>
        </authorList>
    </citation>
    <scope>FUNCTION</scope>
    <scope>TISSUE SPECIFICITY</scope>
    <scope>DEVELOPMENTAL STAGE</scope>
    <scope>DISRUPTION PHENOTYPE</scope>
</reference>
<reference key="11">
    <citation type="journal article" date="2006" name="J. Cell Biol.">
        <title>Reconstitution of protein targeting to the inner envelope membrane of chloroplasts.</title>
        <authorList>
            <person name="Li M."/>
            <person name="Schnell D.J."/>
        </authorList>
    </citation>
    <scope>SUBCELLULAR LOCATION</scope>
</reference>
<reference key="12">
    <citation type="journal article" date="2007" name="Plant J.">
        <title>Precursor binding to an 880-kDa Toc complex as an early step during active import of protein into chloroplasts.</title>
        <authorList>
            <person name="Chen K.Y."/>
            <person name="Li H.M."/>
        </authorList>
    </citation>
    <scope>IDENTIFICATION IN TIC/TOC SUPERCOMPLEX</scope>
</reference>
<reference key="13">
    <citation type="journal article" date="2009" name="Plant Physiol.">
        <title>Large-scale Arabidopsis phosphoproteome profiling reveals novel chloroplast kinase substrates and phosphorylation networks.</title>
        <authorList>
            <person name="Reiland S."/>
            <person name="Messerli G."/>
            <person name="Baerenfaller K."/>
            <person name="Gerrits B."/>
            <person name="Endler A."/>
            <person name="Grossmann J."/>
            <person name="Gruissem W."/>
            <person name="Baginsky S."/>
        </authorList>
    </citation>
    <scope>IDENTIFICATION BY MASS SPECTROMETRY [LARGE SCALE ANALYSIS]</scope>
</reference>
<reference key="14">
    <citation type="journal article" date="2010" name="Plant Cell">
        <title>Stromal Hsp70 is important for protein translocation into pea and Arabidopsis chloroplasts.</title>
        <authorList>
            <person name="Su P.H."/>
            <person name="Li H.M."/>
        </authorList>
    </citation>
    <scope>INTERACTION WITH HSP70</scope>
</reference>
<reference key="15">
    <citation type="journal article" date="2011" name="Nat. Commun.">
        <title>LTD is a protein required for sorting light-harvesting chlorophyll-binding proteins to the chloroplast SRP pathway.</title>
        <authorList>
            <person name="Ouyang M."/>
            <person name="Li X."/>
            <person name="Ma J."/>
            <person name="Chi W."/>
            <person name="Xiao J."/>
            <person name="Zou M."/>
            <person name="Chen F."/>
            <person name="Lu C."/>
            <person name="Zhang L."/>
        </authorList>
    </citation>
    <scope>INTERACTION WITH LTD</scope>
</reference>
<reference key="16">
    <citation type="journal article" date="2010" name="Biochim. Biophys. Acta">
        <title>Protein import into chloroplasts: the Tic complex and its regulation.</title>
        <authorList>
            <person name="Kovacs-Bogdan E."/>
            <person name="Soll J."/>
            <person name="Bolter B."/>
        </authorList>
    </citation>
    <scope>REVIEW</scope>
</reference>
<reference key="17">
    <citation type="journal article" date="2012" name="Mol. Cell. Proteomics">
        <title>Comparative large-scale characterisation of plant vs. mammal proteins reveals similar and idiosyncratic N-alpha acetylation features.</title>
        <authorList>
            <person name="Bienvenut W.V."/>
            <person name="Sumpton D."/>
            <person name="Martinez A."/>
            <person name="Lilla S."/>
            <person name="Espagne C."/>
            <person name="Meinnel T."/>
            <person name="Giglione C."/>
        </authorList>
    </citation>
    <scope>ACETYLATION [LARGE SCALE ANALYSIS] AT SER-52</scope>
    <scope>CLEAVAGE OF TRANSIT PEPTIDE [LARGE SCALE ANALYSIS] AFTER SER-51</scope>
    <scope>IDENTIFICATION BY MASS SPECTROMETRY [LARGE SCALE ANALYSIS]</scope>
</reference>
<sequence>MNPSLVTAINAPISPSPRSPLLSHFLPTLPHRFSKSECLSRRRYRVSFPRSSAASSDQLSVSTQAKNPGIHGNKKELTGLQPIVEKMTPPVRLATSAVVLAASLATGYGLGLRLAGSRNIAFGGAAVAGAAGGAVVYALNSAVPEVAAISLHNYVAEFEDPASVTKDDVEKIADRYGVNKGDEAFQAEICDIYCRYVTSVLPTEGQSLKGDEVAKIVKFKNALGIDEPDAAAMHMEIGRRIFRQRLETGEREGDAEQRRAFMRLVYVSALVFGDASSFLLPWKRVLKVTDAQVEIAIRENAKQLYAERLKLVGRDINVENLVDLRKSQLSFKLSDELAEDLFREHTRKVVVENISSALSILKSRTRAAKSLASVVEELEKVLEFNNLLVSLKSHSEADQFARGVGPISLIGDESDFERRMDDLKLLYRAYVTDALSGGRLEENKLVAMSQLRNILGLGKREAEAISVDVTSKSYRKRLANAVSSGDLEAQDSKAKYLQKLCEELHFDAQKAGAIHEEIYRQKLQQCVTDGELSDDNVAALLRLRVMLCIPQQTVDTAHAEICGTIFEKVVRDAISSGVDGYDAETRKSVRKAAHGLRLSRETAMSIASKAVRRVFTNYIRRARAAENRTDSAKELKKMIAFNTLVVTEMVADIKGESSDKAPEEDPVQEKEEDDEDEEWGSLESLRKTRPDKELAEKMGKPGQTEITLKDDLPDRDRIDLYKTYLLYCVTGEVTRIPFGAQITTKRDDSEYLLLNQLGGILGLSSKEIVNIHVGLAEQAFRQQAEVILADGQLTKARVEQLDELQKQVGLPQPQAEKVIKNITTTKMANAIETAVNQGRLNIKQIRELKEANVSLDSMIAVSLREKLFKKTVSDIFSSGTGEFDETEVYQTIPSDLSIDVEKAKRVVHDLAQSRLSNSLVQAVALLRQRNSKGVVLSLNDLLACDKAVPAEPMSWEVSEELSDLYAIYSKSDPKPAPEKVLRLQYLLGIDDSTATALREMEDGALSSAAEEGNFVF</sequence>
<protein>
    <recommendedName>
        <fullName>Protein TIC110, chloroplastic</fullName>
    </recommendedName>
    <alternativeName>
        <fullName>Translocon at the inner envelope membrane of chloroplasts 110</fullName>
        <shortName>AtTIC110</shortName>
    </alternativeName>
</protein>
<organism>
    <name type="scientific">Arabidopsis thaliana</name>
    <name type="common">Mouse-ear cress</name>
    <dbReference type="NCBI Taxonomy" id="3702"/>
    <lineage>
        <taxon>Eukaryota</taxon>
        <taxon>Viridiplantae</taxon>
        <taxon>Streptophyta</taxon>
        <taxon>Embryophyta</taxon>
        <taxon>Tracheophyta</taxon>
        <taxon>Spermatophyta</taxon>
        <taxon>Magnoliopsida</taxon>
        <taxon>eudicotyledons</taxon>
        <taxon>Gunneridae</taxon>
        <taxon>Pentapetalae</taxon>
        <taxon>rosids</taxon>
        <taxon>malvids</taxon>
        <taxon>Brassicales</taxon>
        <taxon>Brassicaceae</taxon>
        <taxon>Camelineae</taxon>
        <taxon>Arabidopsis</taxon>
    </lineage>
</organism>
<keyword id="KW-0007">Acetylation</keyword>
<keyword id="KW-0150">Chloroplast</keyword>
<keyword id="KW-0472">Membrane</keyword>
<keyword id="KW-0934">Plastid</keyword>
<keyword id="KW-1001">Plastid inner membrane</keyword>
<keyword id="KW-0653">Protein transport</keyword>
<keyword id="KW-1185">Reference proteome</keyword>
<keyword id="KW-0809">Transit peptide</keyword>
<keyword id="KW-0812">Transmembrane</keyword>
<keyword id="KW-1133">Transmembrane helix</keyword>
<keyword id="KW-0813">Transport</keyword>
<proteinExistence type="evidence at protein level"/>
<gene>
    <name type="primary">TIC110</name>
    <name type="ordered locus">At1g06950</name>
    <name type="ORF">F10K1.33</name>
    <name type="ORF">F4H5.1</name>
</gene>
<name>TI110_ARATH</name>